<accession>A2VDU1</accession>
<comment type="function">
    <text evidence="2">Suppresses the insulin receptor and EGFR-transduced MAPK signaling pathway, but does not inhibit MAPK activation by a constitutively active mutant Ras. Probably impairs the formation of GTP-Ras (By similarity). Inhibits Ras-independent, but not Ras-dependent, activation of RAF1 (By similarity). Represses integrin-mediated cell spreading via inhibition of TESK1-mediated phosphorylation of cofilin (By similarity).</text>
</comment>
<comment type="subunit">
    <text evidence="2 3">Interacts (via C-terminus) with TESK1 (via both C- and N-termini); the interaction inhibits TESK1 kinase activity (By similarity). Interacts with RAF1 (By similarity). Interacts with CAV1 (via C-terminus) (By similarity).</text>
</comment>
<comment type="subcellular location">
    <subcellularLocation>
        <location evidence="2">Cytoplasm</location>
    </subcellularLocation>
    <subcellularLocation>
        <location evidence="6">Cell projection</location>
        <location evidence="6">Ruffle membrane</location>
        <topology evidence="6">Peripheral membrane protein</topology>
        <orientation evidence="6">Cytoplasmic side</orientation>
    </subcellularLocation>
    <text evidence="2 3">Found in the cytoplasm in unstimulated cells but is translocated to the membrane ruffles in cells stimulated with EGF (epidermal growth factor) (By similarity). Colocalizes with TESK1 in vesicular spots in the cytoplasm (By similarity).</text>
</comment>
<comment type="domain">
    <text evidence="1">The Cys-rich domain is responsible for the localization of the protein to the membrane ruffles.</text>
</comment>
<comment type="similarity">
    <text evidence="6">Belongs to the sprouty family.</text>
</comment>
<protein>
    <recommendedName>
        <fullName>Protein sprouty homolog 4</fullName>
        <shortName>Spry-4</shortName>
    </recommendedName>
</protein>
<feature type="chain" id="PRO_0000295303" description="Protein sprouty homolog 4">
    <location>
        <begin position="1"/>
        <end position="299"/>
    </location>
</feature>
<feature type="domain" description="SPR" evidence="4">
    <location>
        <begin position="166"/>
        <end position="273"/>
    </location>
</feature>
<feature type="region of interest" description="Disordered" evidence="5">
    <location>
        <begin position="50"/>
        <end position="79"/>
    </location>
</feature>
<feature type="region of interest" description="Disordered" evidence="5">
    <location>
        <begin position="92"/>
        <end position="127"/>
    </location>
</feature>
<feature type="compositionally biased region" description="Low complexity" evidence="5">
    <location>
        <begin position="92"/>
        <end position="107"/>
    </location>
</feature>
<feature type="modified residue" description="N-acetylmethionine" evidence="2">
    <location>
        <position position="1"/>
    </location>
</feature>
<feature type="modified residue" description="Phosphoserine" evidence="2">
    <location>
        <position position="125"/>
    </location>
</feature>
<proteinExistence type="evidence at transcript level"/>
<name>SPY4_BOVIN</name>
<gene>
    <name type="primary">SPRY4</name>
</gene>
<evidence type="ECO:0000250" key="1"/>
<evidence type="ECO:0000250" key="2">
    <source>
        <dbReference type="UniProtKB" id="Q9C004"/>
    </source>
</evidence>
<evidence type="ECO:0000250" key="3">
    <source>
        <dbReference type="UniProtKB" id="Q9WTP2"/>
    </source>
</evidence>
<evidence type="ECO:0000255" key="4">
    <source>
        <dbReference type="PROSITE-ProRule" id="PRU00572"/>
    </source>
</evidence>
<evidence type="ECO:0000256" key="5">
    <source>
        <dbReference type="SAM" id="MobiDB-lite"/>
    </source>
</evidence>
<evidence type="ECO:0000305" key="6"/>
<dbReference type="EMBL" id="BC133401">
    <property type="protein sequence ID" value="AAI33402.1"/>
    <property type="molecule type" value="mRNA"/>
</dbReference>
<dbReference type="RefSeq" id="NP_001074981.1">
    <property type="nucleotide sequence ID" value="NM_001081512.1"/>
</dbReference>
<dbReference type="RefSeq" id="XP_005209581.1">
    <property type="nucleotide sequence ID" value="XM_005209524.5"/>
</dbReference>
<dbReference type="RefSeq" id="XP_005209583.1">
    <property type="nucleotide sequence ID" value="XM_005209526.5"/>
</dbReference>
<dbReference type="RefSeq" id="XP_005209584.1">
    <property type="nucleotide sequence ID" value="XM_005209527.5"/>
</dbReference>
<dbReference type="RefSeq" id="XP_015327768.1">
    <property type="nucleotide sequence ID" value="XM_015472282.1"/>
</dbReference>
<dbReference type="FunCoup" id="A2VDU1">
    <property type="interactions" value="103"/>
</dbReference>
<dbReference type="STRING" id="9913.ENSBTAP00000010852"/>
<dbReference type="PaxDb" id="9913-ENSBTAP00000010852"/>
<dbReference type="Ensembl" id="ENSBTAT00000096125.1">
    <property type="protein sequence ID" value="ENSBTAP00000101036.1"/>
    <property type="gene ID" value="ENSBTAG00000008250.6"/>
</dbReference>
<dbReference type="Ensembl" id="ENSBTAT00000099976.1">
    <property type="protein sequence ID" value="ENSBTAP00000081164.1"/>
    <property type="gene ID" value="ENSBTAG00000008250.6"/>
</dbReference>
<dbReference type="Ensembl" id="ENSBTAT00000107800.1">
    <property type="protein sequence ID" value="ENSBTAP00000095873.1"/>
    <property type="gene ID" value="ENSBTAG00000008250.6"/>
</dbReference>
<dbReference type="Ensembl" id="ENSBTAT00000108074.1">
    <property type="protein sequence ID" value="ENSBTAP00000080110.1"/>
    <property type="gene ID" value="ENSBTAG00000008250.6"/>
</dbReference>
<dbReference type="Ensembl" id="ENSBTAT00000113489.1">
    <property type="protein sequence ID" value="ENSBTAP00000077979.1"/>
    <property type="gene ID" value="ENSBTAG00000008250.6"/>
</dbReference>
<dbReference type="Ensembl" id="ENSBTAT00000125744.1">
    <property type="protein sequence ID" value="ENSBTAP00000081198.1"/>
    <property type="gene ID" value="ENSBTAG00000008250.6"/>
</dbReference>
<dbReference type="GeneID" id="504593"/>
<dbReference type="KEGG" id="bta:504593"/>
<dbReference type="CTD" id="81848"/>
<dbReference type="VEuPathDB" id="HostDB:ENSBTAG00000008250"/>
<dbReference type="VGNC" id="VGNC:35244">
    <property type="gene designation" value="SPRY4"/>
</dbReference>
<dbReference type="eggNOG" id="ENOG502QQ4V">
    <property type="taxonomic scope" value="Eukaryota"/>
</dbReference>
<dbReference type="GeneTree" id="ENSGT00950000183055"/>
<dbReference type="HOGENOM" id="CLU_077696_0_0_1"/>
<dbReference type="InParanoid" id="A2VDU1"/>
<dbReference type="OMA" id="MCLVQGV"/>
<dbReference type="OrthoDB" id="10038884at2759"/>
<dbReference type="TreeFam" id="TF325070"/>
<dbReference type="Proteomes" id="UP000009136">
    <property type="component" value="Chromosome 7"/>
</dbReference>
<dbReference type="Bgee" id="ENSBTAG00000008250">
    <property type="expression patterns" value="Expressed in adenohypophysis and 100 other cell types or tissues"/>
</dbReference>
<dbReference type="GO" id="GO:0005737">
    <property type="term" value="C:cytoplasm"/>
    <property type="evidence" value="ECO:0000250"/>
    <property type="project" value="UniProtKB"/>
</dbReference>
<dbReference type="GO" id="GO:0005829">
    <property type="term" value="C:cytosol"/>
    <property type="evidence" value="ECO:0000318"/>
    <property type="project" value="GO_Central"/>
</dbReference>
<dbReference type="GO" id="GO:0032587">
    <property type="term" value="C:ruffle membrane"/>
    <property type="evidence" value="ECO:0007669"/>
    <property type="project" value="UniProtKB-SubCell"/>
</dbReference>
<dbReference type="GO" id="GO:0004860">
    <property type="term" value="F:protein kinase inhibitor activity"/>
    <property type="evidence" value="ECO:0000250"/>
    <property type="project" value="UniProtKB"/>
</dbReference>
<dbReference type="GO" id="GO:0048513">
    <property type="term" value="P:animal organ development"/>
    <property type="evidence" value="ECO:0000318"/>
    <property type="project" value="GO_Central"/>
</dbReference>
<dbReference type="GO" id="GO:0070373">
    <property type="term" value="P:negative regulation of ERK1 and ERK2 cascade"/>
    <property type="evidence" value="ECO:0000318"/>
    <property type="project" value="GO_Central"/>
</dbReference>
<dbReference type="GO" id="GO:0040037">
    <property type="term" value="P:negative regulation of fibroblast growth factor receptor signaling pathway"/>
    <property type="evidence" value="ECO:0000318"/>
    <property type="project" value="GO_Central"/>
</dbReference>
<dbReference type="GO" id="GO:0046580">
    <property type="term" value="P:negative regulation of Ras protein signal transduction"/>
    <property type="evidence" value="ECO:0000318"/>
    <property type="project" value="GO_Central"/>
</dbReference>
<dbReference type="GO" id="GO:1900025">
    <property type="term" value="P:negative regulation of substrate adhesion-dependent cell spreading"/>
    <property type="evidence" value="ECO:0000250"/>
    <property type="project" value="UniProtKB"/>
</dbReference>
<dbReference type="InterPro" id="IPR007875">
    <property type="entry name" value="Sprouty"/>
</dbReference>
<dbReference type="InterPro" id="IPR051192">
    <property type="entry name" value="Sprouty_domain"/>
</dbReference>
<dbReference type="PANTHER" id="PTHR12365:SF6">
    <property type="entry name" value="PROTEIN SPROUTY HOMOLOG 4"/>
    <property type="match status" value="1"/>
</dbReference>
<dbReference type="PANTHER" id="PTHR12365">
    <property type="entry name" value="SPROUTY"/>
    <property type="match status" value="1"/>
</dbReference>
<dbReference type="Pfam" id="PF05210">
    <property type="entry name" value="Sprouty"/>
    <property type="match status" value="1"/>
</dbReference>
<dbReference type="PROSITE" id="PS51227">
    <property type="entry name" value="SPR"/>
    <property type="match status" value="1"/>
</dbReference>
<reference key="1">
    <citation type="submission" date="2007-02" db="EMBL/GenBank/DDBJ databases">
        <authorList>
            <consortium name="NIH - Mammalian Gene Collection (MGC) project"/>
        </authorList>
    </citation>
    <scope>NUCLEOTIDE SEQUENCE [LARGE SCALE MRNA]</scope>
    <source>
        <strain>Hereford</strain>
        <tissue>Ascending colon</tissue>
    </source>
</reference>
<sequence>MEPPIPQSVPLTPSSVMVQPLLDSRTAHSRLQHPLTILPIDQMKTSHVENDYIDNPGLAPPSGPKRTRGGAPELAPTPARCDQDVTHHWISFSGRPSSVSSSSSTSSDQRLLDHMAPPPVADQASPRAVRIQPKAIHCKPLDLKGPAGPPELDKHFLLCEACGKCKCKECASPRTLPSCWVCNQECLCSAQTLVNYGTCMCLVQGIFYHCTNEDDEGSCADHPCSCSRSNCCARWSFMGALSLVLPCLLCYLPATGCVKLAQRGYDRLRRPGCRCKHTNSVICKAAAGDAKASRPDKPF</sequence>
<keyword id="KW-0007">Acetylation</keyword>
<keyword id="KW-1003">Cell membrane</keyword>
<keyword id="KW-0966">Cell projection</keyword>
<keyword id="KW-0963">Cytoplasm</keyword>
<keyword id="KW-0217">Developmental protein</keyword>
<keyword id="KW-0472">Membrane</keyword>
<keyword id="KW-0597">Phosphoprotein</keyword>
<keyword id="KW-1185">Reference proteome</keyword>
<organism>
    <name type="scientific">Bos taurus</name>
    <name type="common">Bovine</name>
    <dbReference type="NCBI Taxonomy" id="9913"/>
    <lineage>
        <taxon>Eukaryota</taxon>
        <taxon>Metazoa</taxon>
        <taxon>Chordata</taxon>
        <taxon>Craniata</taxon>
        <taxon>Vertebrata</taxon>
        <taxon>Euteleostomi</taxon>
        <taxon>Mammalia</taxon>
        <taxon>Eutheria</taxon>
        <taxon>Laurasiatheria</taxon>
        <taxon>Artiodactyla</taxon>
        <taxon>Ruminantia</taxon>
        <taxon>Pecora</taxon>
        <taxon>Bovidae</taxon>
        <taxon>Bovinae</taxon>
        <taxon>Bos</taxon>
    </lineage>
</organism>